<accession>A3PMX6</accession>
<dbReference type="EC" id="3.6.1.-" evidence="1"/>
<dbReference type="EMBL" id="CP000577">
    <property type="protein sequence ID" value="ABN77692.1"/>
    <property type="molecule type" value="Genomic_DNA"/>
</dbReference>
<dbReference type="RefSeq" id="WP_011841769.1">
    <property type="nucleotide sequence ID" value="NC_009049.1"/>
</dbReference>
<dbReference type="SMR" id="A3PMX6"/>
<dbReference type="KEGG" id="rsh:Rsph17029_2590"/>
<dbReference type="HOGENOM" id="CLU_087195_3_0_5"/>
<dbReference type="GO" id="GO:0034432">
    <property type="term" value="F:bis(5'-adenosyl)-pentaphosphatase activity"/>
    <property type="evidence" value="ECO:0007669"/>
    <property type="project" value="TreeGrafter"/>
</dbReference>
<dbReference type="GO" id="GO:0008893">
    <property type="term" value="F:guanosine-3',5'-bis(diphosphate) 3'-diphosphatase activity"/>
    <property type="evidence" value="ECO:0007669"/>
    <property type="project" value="TreeGrafter"/>
</dbReference>
<dbReference type="GO" id="GO:0006753">
    <property type="term" value="P:nucleoside phosphate metabolic process"/>
    <property type="evidence" value="ECO:0007669"/>
    <property type="project" value="TreeGrafter"/>
</dbReference>
<dbReference type="GO" id="GO:0019693">
    <property type="term" value="P:ribose phosphate metabolic process"/>
    <property type="evidence" value="ECO:0007669"/>
    <property type="project" value="TreeGrafter"/>
</dbReference>
<dbReference type="CDD" id="cd03671">
    <property type="entry name" value="NUDIX_Ap4A_hydrolase_plant_like"/>
    <property type="match status" value="1"/>
</dbReference>
<dbReference type="Gene3D" id="3.90.79.10">
    <property type="entry name" value="Nucleoside Triphosphate Pyrophosphohydrolase"/>
    <property type="match status" value="1"/>
</dbReference>
<dbReference type="HAMAP" id="MF_00298">
    <property type="entry name" value="Nudix_RppH"/>
    <property type="match status" value="1"/>
</dbReference>
<dbReference type="InterPro" id="IPR020476">
    <property type="entry name" value="Nudix_hydrolase"/>
</dbReference>
<dbReference type="InterPro" id="IPR015797">
    <property type="entry name" value="NUDIX_hydrolase-like_dom_sf"/>
</dbReference>
<dbReference type="InterPro" id="IPR020084">
    <property type="entry name" value="NUDIX_hydrolase_CS"/>
</dbReference>
<dbReference type="InterPro" id="IPR000086">
    <property type="entry name" value="NUDIX_hydrolase_dom"/>
</dbReference>
<dbReference type="InterPro" id="IPR022927">
    <property type="entry name" value="RppH"/>
</dbReference>
<dbReference type="NCBIfam" id="NF001938">
    <property type="entry name" value="PRK00714.1-5"/>
    <property type="match status" value="1"/>
</dbReference>
<dbReference type="PANTHER" id="PTHR11839:SF22">
    <property type="entry name" value="NUDIX HYDROLASE 26, CHLOROPLASTIC"/>
    <property type="match status" value="1"/>
</dbReference>
<dbReference type="PANTHER" id="PTHR11839">
    <property type="entry name" value="UDP/ADP-SUGAR PYROPHOSPHATASE"/>
    <property type="match status" value="1"/>
</dbReference>
<dbReference type="Pfam" id="PF00293">
    <property type="entry name" value="NUDIX"/>
    <property type="match status" value="1"/>
</dbReference>
<dbReference type="PRINTS" id="PR00502">
    <property type="entry name" value="NUDIXFAMILY"/>
</dbReference>
<dbReference type="SUPFAM" id="SSF55811">
    <property type="entry name" value="Nudix"/>
    <property type="match status" value="1"/>
</dbReference>
<dbReference type="PROSITE" id="PS51462">
    <property type="entry name" value="NUDIX"/>
    <property type="match status" value="1"/>
</dbReference>
<dbReference type="PROSITE" id="PS00893">
    <property type="entry name" value="NUDIX_BOX"/>
    <property type="match status" value="1"/>
</dbReference>
<proteinExistence type="inferred from homology"/>
<gene>
    <name evidence="1" type="primary">rppH</name>
    <name evidence="1" type="synonym">nudH</name>
    <name type="ordered locus">Rsph17029_2590</name>
</gene>
<feature type="chain" id="PRO_1000021984" description="RNA pyrophosphohydrolase">
    <location>
        <begin position="1"/>
        <end position="162"/>
    </location>
</feature>
<feature type="domain" description="Nudix hydrolase" evidence="1">
    <location>
        <begin position="11"/>
        <end position="155"/>
    </location>
</feature>
<feature type="short sequence motif" description="Nudix box">
    <location>
        <begin position="45"/>
        <end position="66"/>
    </location>
</feature>
<keyword id="KW-0378">Hydrolase</keyword>
<sequence length="162" mass="18473">MERTIDPGTLPYRPCVGIVLINREGLIFAGQRIDSPVPAWQMPQGGIDEGEKPREAALRELWEETGIPAERVEFVAKAPDWVTYDLPPELLGRVWGGKYRGQRQKWFLYRYLGTDDEVGIGTDHAEFSCWRWIGAEEMVAAIVPFKRAVYEEVVATFRPHLA</sequence>
<evidence type="ECO:0000255" key="1">
    <source>
        <dbReference type="HAMAP-Rule" id="MF_00298"/>
    </source>
</evidence>
<organism>
    <name type="scientific">Cereibacter sphaeroides (strain ATCC 17029 / ATH 2.4.9)</name>
    <name type="common">Rhodobacter sphaeroides</name>
    <dbReference type="NCBI Taxonomy" id="349101"/>
    <lineage>
        <taxon>Bacteria</taxon>
        <taxon>Pseudomonadati</taxon>
        <taxon>Pseudomonadota</taxon>
        <taxon>Alphaproteobacteria</taxon>
        <taxon>Rhodobacterales</taxon>
        <taxon>Paracoccaceae</taxon>
        <taxon>Cereibacter</taxon>
    </lineage>
</organism>
<reference key="1">
    <citation type="submission" date="2007-02" db="EMBL/GenBank/DDBJ databases">
        <title>Complete sequence of chromosome 1 of Rhodobacter sphaeroides ATCC 17029.</title>
        <authorList>
            <person name="Copeland A."/>
            <person name="Lucas S."/>
            <person name="Lapidus A."/>
            <person name="Barry K."/>
            <person name="Detter J.C."/>
            <person name="Glavina del Rio T."/>
            <person name="Hammon N."/>
            <person name="Israni S."/>
            <person name="Dalin E."/>
            <person name="Tice H."/>
            <person name="Pitluck S."/>
            <person name="Kiss H."/>
            <person name="Brettin T."/>
            <person name="Bruce D."/>
            <person name="Han C."/>
            <person name="Tapia R."/>
            <person name="Gilna P."/>
            <person name="Schmutz J."/>
            <person name="Larimer F."/>
            <person name="Land M."/>
            <person name="Hauser L."/>
            <person name="Kyrpides N."/>
            <person name="Mikhailova N."/>
            <person name="Richardson P."/>
            <person name="Mackenzie C."/>
            <person name="Choudhary M."/>
            <person name="Donohue T.J."/>
            <person name="Kaplan S."/>
        </authorList>
    </citation>
    <scope>NUCLEOTIDE SEQUENCE [LARGE SCALE GENOMIC DNA]</scope>
    <source>
        <strain>ATCC 17029 / ATH 2.4.9</strain>
    </source>
</reference>
<comment type="function">
    <text evidence="1">Accelerates the degradation of transcripts by removing pyrophosphate from the 5'-end of triphosphorylated RNA, leading to a more labile monophosphorylated state that can stimulate subsequent ribonuclease cleavage.</text>
</comment>
<comment type="cofactor">
    <cofactor evidence="1">
        <name>a divalent metal cation</name>
        <dbReference type="ChEBI" id="CHEBI:60240"/>
    </cofactor>
</comment>
<comment type="similarity">
    <text evidence="1">Belongs to the Nudix hydrolase family. RppH subfamily.</text>
</comment>
<protein>
    <recommendedName>
        <fullName evidence="1">RNA pyrophosphohydrolase</fullName>
        <ecNumber evidence="1">3.6.1.-</ecNumber>
    </recommendedName>
    <alternativeName>
        <fullName evidence="1">(Di)nucleoside polyphosphate hydrolase</fullName>
    </alternativeName>
</protein>
<name>RPPH_CERS1</name>